<organism>
    <name type="scientific">Aspergillus aculeatus</name>
    <dbReference type="NCBI Taxonomy" id="5053"/>
    <lineage>
        <taxon>Eukaryota</taxon>
        <taxon>Fungi</taxon>
        <taxon>Dikarya</taxon>
        <taxon>Ascomycota</taxon>
        <taxon>Pezizomycotina</taxon>
        <taxon>Eurotiomycetes</taxon>
        <taxon>Eurotiomycetidae</taxon>
        <taxon>Eurotiales</taxon>
        <taxon>Aspergillaceae</taxon>
        <taxon>Aspergillus</taxon>
        <taxon>Aspergillus subgen. Circumdati</taxon>
    </lineage>
</organism>
<protein>
    <recommendedName>
        <fullName>Probable exo-1,4-beta-xylosidase xlnD</fullName>
        <ecNumber>3.2.1.37</ecNumber>
    </recommendedName>
    <alternativeName>
        <fullName>1,4-beta-D-xylan xylohydrolase xlnD</fullName>
    </alternativeName>
    <alternativeName>
        <fullName>Beta-xylosidase A</fullName>
    </alternativeName>
    <alternativeName>
        <fullName>Beta-xylosidase xlnD</fullName>
    </alternativeName>
    <alternativeName>
        <fullName>Xylobiase xlnD</fullName>
    </alternativeName>
</protein>
<gene>
    <name type="primary">xlnD</name>
    <name type="synonym">xyl2</name>
    <name type="synonym">xylA</name>
</gene>
<comment type="function">
    <text evidence="1">Xylan 1,4-beta-xylosidase involved in the hydrolysis of xylan, a major structural heterogeneous polysaccharide found in plant biomass representing the second most abundant polysaccharide in the biosphere, after cellulose.</text>
</comment>
<comment type="catalytic activity">
    <reaction>
        <text>Hydrolysis of (1-&gt;4)-beta-D-xylans, to remove successive D-xylose residues from the non-reducing termini.</text>
        <dbReference type="EC" id="3.2.1.37"/>
    </reaction>
</comment>
<comment type="pathway">
    <text>Glycan degradation; xylan degradation.</text>
</comment>
<comment type="subcellular location">
    <subcellularLocation>
        <location evidence="1">Secreted</location>
    </subcellularLocation>
</comment>
<comment type="similarity">
    <text evidence="3">Belongs to the glycosyl hydrolase 3 family.</text>
</comment>
<reference key="1">
    <citation type="submission" date="2008-09" db="EMBL/GenBank/DDBJ databases">
        <title>Cloning of two xylosidase genes from Aspergillus aculeatus F-50.</title>
        <authorList>
            <person name="Sumitani J."/>
            <person name="Konishi T."/>
            <person name="Tani S."/>
            <person name="Arai M."/>
            <person name="Kawaguchi T."/>
        </authorList>
    </citation>
    <scope>NUCLEOTIDE SEQUENCE [GENOMIC DNA]</scope>
    <source>
        <strain>F-50</strain>
    </source>
</reference>
<sequence length="805" mass="86343">MAVAALALLALLPQALGQHNSSYVDYNVEANPDLFPQCLDTISLSFPDCQSGPLSKNLVCDSTASPYDRAAALVSLFTLEELIANTGNTSPGVPRLGLPPYQVWSEALHGLGRANFTDNGALHAGRPSFPSPILSAAAFNRTLINQIASIISTQGRAFNNAGRFGLDVYSPNINTFRHPVWGRGQETPGEDAYTLTAAYAYEYITGIQGGVNPEHLKLAATAKHFAGYDIENWDNHSRLGNDVNITQQDLAEYYTPQFLVAARDAHVHSFMCSYNAVNGVPSCSNTFFLQTLLRDTFSFVDHGYVSGDCGAVYGVFNPHGYAANEPSAAADAILAGTDIDCGTSYQYHFNESITTGAVARDDIERGFIRLYANLVELGYFDGNSSSSNPYRSLGWPDVQKTDAWNISYEAAVEGIVLLKNDGTLPLASPSEGKNKSIALIGPWANATTQLQGNYYGDAPYLISPVDAFTAAGYTVHYAPGTEISTNSTANFSAALSAARAADTIVFLGGIDNTIEAEAQDRSSIAWPGNQLELISQLAAQKSDDQPLVVYQMGGGQVDSSSLKFNAKVNALLWGGYPGQSGGLALRDILTGARAPAGRLTTTQYPAAYAESFSALDMNLRPNETTQNPGQTYMWYTGEPVYAFGHGLFYTTFNASSAQAAKTKYTFNITDLTSAAHPDTTTVGQRTLFNFTASITNSGQRDSDYTALVYANTSTAGPSPYPNKWLVGFDRLAAVAKEGGTAELNVPVAVDRLARVDEAGNTVLFPGRYEVALNNEREVVVEVELVGEQVVLLKWPEEVQGVAGDE</sequence>
<accession>C0STH4</accession>
<dbReference type="EC" id="3.2.1.37"/>
<dbReference type="EMBL" id="AB462375">
    <property type="protein sequence ID" value="BAH30675.1"/>
    <property type="molecule type" value="Genomic_DNA"/>
</dbReference>
<dbReference type="SMR" id="C0STH4"/>
<dbReference type="CAZy" id="GH3">
    <property type="family name" value="Glycoside Hydrolase Family 3"/>
</dbReference>
<dbReference type="GlyCosmos" id="C0STH4">
    <property type="glycosylation" value="17 sites, No reported glycans"/>
</dbReference>
<dbReference type="VEuPathDB" id="FungiDB:ASPACDRAFT_74214"/>
<dbReference type="UniPathway" id="UPA00114"/>
<dbReference type="GO" id="GO:0005576">
    <property type="term" value="C:extracellular region"/>
    <property type="evidence" value="ECO:0007669"/>
    <property type="project" value="UniProtKB-SubCell"/>
</dbReference>
<dbReference type="GO" id="GO:0046556">
    <property type="term" value="F:alpha-L-arabinofuranosidase activity"/>
    <property type="evidence" value="ECO:0007669"/>
    <property type="project" value="TreeGrafter"/>
</dbReference>
<dbReference type="GO" id="GO:0009044">
    <property type="term" value="F:xylan 1,4-beta-xylosidase activity"/>
    <property type="evidence" value="ECO:0007669"/>
    <property type="project" value="UniProtKB-EC"/>
</dbReference>
<dbReference type="GO" id="GO:0031222">
    <property type="term" value="P:arabinan catabolic process"/>
    <property type="evidence" value="ECO:0007669"/>
    <property type="project" value="TreeGrafter"/>
</dbReference>
<dbReference type="GO" id="GO:0045493">
    <property type="term" value="P:xylan catabolic process"/>
    <property type="evidence" value="ECO:0007669"/>
    <property type="project" value="UniProtKB-UniPathway"/>
</dbReference>
<dbReference type="FunFam" id="2.60.40.10:FF:001420">
    <property type="entry name" value="Exo-1,4-beta-xylosidase xlnD"/>
    <property type="match status" value="1"/>
</dbReference>
<dbReference type="FunFam" id="3.40.50.1700:FF:000007">
    <property type="entry name" value="Exo-1,4-beta-xylosidase xlnD"/>
    <property type="match status" value="1"/>
</dbReference>
<dbReference type="Gene3D" id="3.40.50.1700">
    <property type="entry name" value="Glycoside hydrolase family 3 C-terminal domain"/>
    <property type="match status" value="1"/>
</dbReference>
<dbReference type="Gene3D" id="3.20.20.300">
    <property type="entry name" value="Glycoside hydrolase, family 3, N-terminal domain"/>
    <property type="match status" value="1"/>
</dbReference>
<dbReference type="Gene3D" id="2.60.40.10">
    <property type="entry name" value="Immunoglobulins"/>
    <property type="match status" value="1"/>
</dbReference>
<dbReference type="InterPro" id="IPR044993">
    <property type="entry name" value="BXL"/>
</dbReference>
<dbReference type="InterPro" id="IPR026891">
    <property type="entry name" value="Fn3-like"/>
</dbReference>
<dbReference type="InterPro" id="IPR002772">
    <property type="entry name" value="Glyco_hydro_3_C"/>
</dbReference>
<dbReference type="InterPro" id="IPR036881">
    <property type="entry name" value="Glyco_hydro_3_C_sf"/>
</dbReference>
<dbReference type="InterPro" id="IPR001764">
    <property type="entry name" value="Glyco_hydro_3_N"/>
</dbReference>
<dbReference type="InterPro" id="IPR036962">
    <property type="entry name" value="Glyco_hydro_3_N_sf"/>
</dbReference>
<dbReference type="InterPro" id="IPR017853">
    <property type="entry name" value="Glycoside_hydrolase_SF"/>
</dbReference>
<dbReference type="InterPro" id="IPR013783">
    <property type="entry name" value="Ig-like_fold"/>
</dbReference>
<dbReference type="PANTHER" id="PTHR42721:SF13">
    <property type="entry name" value="EXO-1,4-BETA-XYLOSIDASE XLND"/>
    <property type="match status" value="1"/>
</dbReference>
<dbReference type="PANTHER" id="PTHR42721">
    <property type="entry name" value="SUGAR HYDROLASE-RELATED"/>
    <property type="match status" value="1"/>
</dbReference>
<dbReference type="Pfam" id="PF00933">
    <property type="entry name" value="Glyco_hydro_3"/>
    <property type="match status" value="1"/>
</dbReference>
<dbReference type="Pfam" id="PF01915">
    <property type="entry name" value="Glyco_hydro_3_C"/>
    <property type="match status" value="1"/>
</dbReference>
<dbReference type="SMART" id="SM01217">
    <property type="entry name" value="Fn3_like"/>
    <property type="match status" value="1"/>
</dbReference>
<dbReference type="SUPFAM" id="SSF51445">
    <property type="entry name" value="(Trans)glycosidases"/>
    <property type="match status" value="1"/>
</dbReference>
<dbReference type="SUPFAM" id="SSF52279">
    <property type="entry name" value="Beta-D-glucan exohydrolase, C-terminal domain"/>
    <property type="match status" value="1"/>
</dbReference>
<proteinExistence type="inferred from homology"/>
<name>XYND_ASPAC</name>
<keyword id="KW-0119">Carbohydrate metabolism</keyword>
<keyword id="KW-0325">Glycoprotein</keyword>
<keyword id="KW-0326">Glycosidase</keyword>
<keyword id="KW-0378">Hydrolase</keyword>
<keyword id="KW-0624">Polysaccharide degradation</keyword>
<keyword id="KW-0964">Secreted</keyword>
<keyword id="KW-0732">Signal</keyword>
<keyword id="KW-0858">Xylan degradation</keyword>
<evidence type="ECO:0000250" key="1"/>
<evidence type="ECO:0000255" key="2"/>
<evidence type="ECO:0000305" key="3"/>
<feature type="signal peptide" evidence="2">
    <location>
        <begin position="1"/>
        <end position="17"/>
    </location>
</feature>
<feature type="chain" id="PRO_0000393283" description="Probable exo-1,4-beta-xylosidase xlnD">
    <location>
        <begin position="18"/>
        <end position="805"/>
    </location>
</feature>
<feature type="active site" evidence="1">
    <location>
        <position position="308"/>
    </location>
</feature>
<feature type="glycosylation site" description="N-linked (GlcNAc...) asparagine" evidence="2">
    <location>
        <position position="20"/>
    </location>
</feature>
<feature type="glycosylation site" description="N-linked (GlcNAc...) asparagine" evidence="2">
    <location>
        <position position="115"/>
    </location>
</feature>
<feature type="glycosylation site" description="N-linked (GlcNAc...) asparagine" evidence="2">
    <location>
        <position position="140"/>
    </location>
</feature>
<feature type="glycosylation site" description="N-linked (GlcNAc...) asparagine" evidence="2">
    <location>
        <position position="235"/>
    </location>
</feature>
<feature type="glycosylation site" description="N-linked (GlcNAc...) asparagine" evidence="2">
    <location>
        <position position="244"/>
    </location>
</feature>
<feature type="glycosylation site" description="N-linked (GlcNAc...) asparagine" evidence="2">
    <location>
        <position position="350"/>
    </location>
</feature>
<feature type="glycosylation site" description="N-linked (GlcNAc...) asparagine" evidence="2">
    <location>
        <position position="383"/>
    </location>
</feature>
<feature type="glycosylation site" description="N-linked (GlcNAc...) asparagine" evidence="2">
    <location>
        <position position="405"/>
    </location>
</feature>
<feature type="glycosylation site" description="N-linked (GlcNAc...) asparagine" evidence="2">
    <location>
        <position position="434"/>
    </location>
</feature>
<feature type="glycosylation site" description="N-linked (GlcNAc...) asparagine" evidence="2">
    <location>
        <position position="445"/>
    </location>
</feature>
<feature type="glycosylation site" description="N-linked (GlcNAc...) asparagine" evidence="2">
    <location>
        <position position="486"/>
    </location>
</feature>
<feature type="glycosylation site" description="N-linked (GlcNAc...) asparagine" evidence="2">
    <location>
        <position position="490"/>
    </location>
</feature>
<feature type="glycosylation site" description="N-linked (GlcNAc...) asparagine" evidence="2">
    <location>
        <position position="622"/>
    </location>
</feature>
<feature type="glycosylation site" description="N-linked (GlcNAc...) asparagine" evidence="2">
    <location>
        <position position="653"/>
    </location>
</feature>
<feature type="glycosylation site" description="N-linked (GlcNAc...) asparagine" evidence="2">
    <location>
        <position position="667"/>
    </location>
</feature>
<feature type="glycosylation site" description="N-linked (GlcNAc...) asparagine" evidence="2">
    <location>
        <position position="689"/>
    </location>
</feature>
<feature type="glycosylation site" description="N-linked (GlcNAc...) asparagine" evidence="2">
    <location>
        <position position="711"/>
    </location>
</feature>